<protein>
    <recommendedName>
        <fullName evidence="1">Large ribosomal subunit protein uL29</fullName>
    </recommendedName>
    <alternativeName>
        <fullName evidence="2">50S ribosomal protein L29</fullName>
    </alternativeName>
</protein>
<dbReference type="EMBL" id="BA000030">
    <property type="protein sequence ID" value="BAC72646.1"/>
    <property type="molecule type" value="Genomic_DNA"/>
</dbReference>
<dbReference type="RefSeq" id="WP_003998824.1">
    <property type="nucleotide sequence ID" value="NZ_JZJK01000077.1"/>
</dbReference>
<dbReference type="SMR" id="Q82DN7"/>
<dbReference type="GeneID" id="96786424"/>
<dbReference type="KEGG" id="sma:SAVERM_4934"/>
<dbReference type="eggNOG" id="COG0255">
    <property type="taxonomic scope" value="Bacteria"/>
</dbReference>
<dbReference type="HOGENOM" id="CLU_158491_3_3_11"/>
<dbReference type="OrthoDB" id="9815192at2"/>
<dbReference type="Proteomes" id="UP000000428">
    <property type="component" value="Chromosome"/>
</dbReference>
<dbReference type="GO" id="GO:0022625">
    <property type="term" value="C:cytosolic large ribosomal subunit"/>
    <property type="evidence" value="ECO:0007669"/>
    <property type="project" value="TreeGrafter"/>
</dbReference>
<dbReference type="GO" id="GO:0003735">
    <property type="term" value="F:structural constituent of ribosome"/>
    <property type="evidence" value="ECO:0007669"/>
    <property type="project" value="InterPro"/>
</dbReference>
<dbReference type="GO" id="GO:0006412">
    <property type="term" value="P:translation"/>
    <property type="evidence" value="ECO:0007669"/>
    <property type="project" value="UniProtKB-UniRule"/>
</dbReference>
<dbReference type="CDD" id="cd00427">
    <property type="entry name" value="Ribosomal_L29_HIP"/>
    <property type="match status" value="1"/>
</dbReference>
<dbReference type="FunFam" id="1.10.287.310:FF:000001">
    <property type="entry name" value="50S ribosomal protein L29"/>
    <property type="match status" value="1"/>
</dbReference>
<dbReference type="Gene3D" id="1.10.287.310">
    <property type="match status" value="1"/>
</dbReference>
<dbReference type="HAMAP" id="MF_00374">
    <property type="entry name" value="Ribosomal_uL29"/>
    <property type="match status" value="1"/>
</dbReference>
<dbReference type="InterPro" id="IPR050063">
    <property type="entry name" value="Ribosomal_protein_uL29"/>
</dbReference>
<dbReference type="InterPro" id="IPR001854">
    <property type="entry name" value="Ribosomal_uL29"/>
</dbReference>
<dbReference type="InterPro" id="IPR018254">
    <property type="entry name" value="Ribosomal_uL29_CS"/>
</dbReference>
<dbReference type="InterPro" id="IPR036049">
    <property type="entry name" value="Ribosomal_uL29_sf"/>
</dbReference>
<dbReference type="NCBIfam" id="TIGR00012">
    <property type="entry name" value="L29"/>
    <property type="match status" value="1"/>
</dbReference>
<dbReference type="PANTHER" id="PTHR10916">
    <property type="entry name" value="60S RIBOSOMAL PROTEIN L35/50S RIBOSOMAL PROTEIN L29"/>
    <property type="match status" value="1"/>
</dbReference>
<dbReference type="PANTHER" id="PTHR10916:SF0">
    <property type="entry name" value="LARGE RIBOSOMAL SUBUNIT PROTEIN UL29C"/>
    <property type="match status" value="1"/>
</dbReference>
<dbReference type="Pfam" id="PF00831">
    <property type="entry name" value="Ribosomal_L29"/>
    <property type="match status" value="1"/>
</dbReference>
<dbReference type="SUPFAM" id="SSF46561">
    <property type="entry name" value="Ribosomal protein L29 (L29p)"/>
    <property type="match status" value="1"/>
</dbReference>
<dbReference type="PROSITE" id="PS00579">
    <property type="entry name" value="RIBOSOMAL_L29"/>
    <property type="match status" value="1"/>
</dbReference>
<sequence>MSAGTKASELRELGDEELLAKLREAKEELFNLRFQAATGQLENHGRLKAVRKDIARIYTLMRERELGIETVESA</sequence>
<reference key="1">
    <citation type="journal article" date="2001" name="Proc. Natl. Acad. Sci. U.S.A.">
        <title>Genome sequence of an industrial microorganism Streptomyces avermitilis: deducing the ability of producing secondary metabolites.</title>
        <authorList>
            <person name="Omura S."/>
            <person name="Ikeda H."/>
            <person name="Ishikawa J."/>
            <person name="Hanamoto A."/>
            <person name="Takahashi C."/>
            <person name="Shinose M."/>
            <person name="Takahashi Y."/>
            <person name="Horikawa H."/>
            <person name="Nakazawa H."/>
            <person name="Osonoe T."/>
            <person name="Kikuchi H."/>
            <person name="Shiba T."/>
            <person name="Sakaki Y."/>
            <person name="Hattori M."/>
        </authorList>
    </citation>
    <scope>NUCLEOTIDE SEQUENCE [LARGE SCALE GENOMIC DNA]</scope>
    <source>
        <strain>ATCC 31267 / DSM 46492 / JCM 5070 / NBRC 14893 / NCIMB 12804 / NRRL 8165 / MA-4680</strain>
    </source>
</reference>
<reference key="2">
    <citation type="journal article" date="2003" name="Nat. Biotechnol.">
        <title>Complete genome sequence and comparative analysis of the industrial microorganism Streptomyces avermitilis.</title>
        <authorList>
            <person name="Ikeda H."/>
            <person name="Ishikawa J."/>
            <person name="Hanamoto A."/>
            <person name="Shinose M."/>
            <person name="Kikuchi H."/>
            <person name="Shiba T."/>
            <person name="Sakaki Y."/>
            <person name="Hattori M."/>
            <person name="Omura S."/>
        </authorList>
    </citation>
    <scope>NUCLEOTIDE SEQUENCE [LARGE SCALE GENOMIC DNA]</scope>
    <source>
        <strain>ATCC 31267 / DSM 46492 / JCM 5070 / NBRC 14893 / NCIMB 12804 / NRRL 8165 / MA-4680</strain>
    </source>
</reference>
<proteinExistence type="inferred from homology"/>
<feature type="chain" id="PRO_0000130465" description="Large ribosomal subunit protein uL29">
    <location>
        <begin position="1"/>
        <end position="74"/>
    </location>
</feature>
<gene>
    <name evidence="1" type="primary">rpmC</name>
    <name type="ordered locus">SAV_4934</name>
</gene>
<name>RL29_STRAW</name>
<accession>Q82DN7</accession>
<comment type="similarity">
    <text evidence="1">Belongs to the universal ribosomal protein uL29 family.</text>
</comment>
<keyword id="KW-1185">Reference proteome</keyword>
<keyword id="KW-0687">Ribonucleoprotein</keyword>
<keyword id="KW-0689">Ribosomal protein</keyword>
<organism>
    <name type="scientific">Streptomyces avermitilis (strain ATCC 31267 / DSM 46492 / JCM 5070 / NBRC 14893 / NCIMB 12804 / NRRL 8165 / MA-4680)</name>
    <dbReference type="NCBI Taxonomy" id="227882"/>
    <lineage>
        <taxon>Bacteria</taxon>
        <taxon>Bacillati</taxon>
        <taxon>Actinomycetota</taxon>
        <taxon>Actinomycetes</taxon>
        <taxon>Kitasatosporales</taxon>
        <taxon>Streptomycetaceae</taxon>
        <taxon>Streptomyces</taxon>
    </lineage>
</organism>
<evidence type="ECO:0000255" key="1">
    <source>
        <dbReference type="HAMAP-Rule" id="MF_00374"/>
    </source>
</evidence>
<evidence type="ECO:0000305" key="2"/>